<sequence>MGRSRSRSSSRSKHVKSGKHNKKRSRSREKERVRKRSKSRESKRNRRRESRSRSRSNTASRRERERPASPPDRIDIFGRTVSKRSSLDEKQKREEEEKKAEYERQRRIRQQEIEEKLIEEETARRVEELVAKRVEEELEKRKDEIEREVLRRVEEAKRIMEKQLLEELERQRQAELSAQKAREEEERGKREELERILEENNRKIADAQAKLAEEQLKIVEEQRKIHEERMKLDQERQRQQKEEQKIILGKGKSRPKLSFSFKNPD</sequence>
<comment type="function">
    <text evidence="1">Dual function regulator of gene expression; regulator of transcription and modulator of alternative splicing. General coactivator of nuclear receptor-induced gene expression.</text>
</comment>
<comment type="subcellular location">
    <subcellularLocation>
        <location evidence="1">Nucleus</location>
    </subcellularLocation>
    <subcellularLocation>
        <location evidence="1">Nucleus speckle</location>
    </subcellularLocation>
    <subcellularLocation>
        <location evidence="1">Chromosome</location>
    </subcellularLocation>
</comment>
<comment type="domain">
    <text evidence="1">The N-terminal region can bind RNA; preferentially binds 5'-CGG[AG]GG-3' motifs.</text>
</comment>
<comment type="domain">
    <text evidence="1">The non-classical LXXLL motifs are not required for nuclear receptor coactivator activity.</text>
</comment>
<comment type="domain">
    <text evidence="1">The C-terminal region is necessary and sufficient for regulation of transcription and nuclear receptor coactivator activity. The C-terminal region is not required for RNA binding.</text>
</comment>
<comment type="similarity">
    <text evidence="3">Belongs to the ARGLU1 family.</text>
</comment>
<evidence type="ECO:0000250" key="1">
    <source>
        <dbReference type="UniProtKB" id="Q9NWB6"/>
    </source>
</evidence>
<evidence type="ECO:0000256" key="2">
    <source>
        <dbReference type="SAM" id="MobiDB-lite"/>
    </source>
</evidence>
<evidence type="ECO:0000305" key="3"/>
<evidence type="ECO:0000312" key="4">
    <source>
        <dbReference type="Proteomes" id="UP000186698"/>
    </source>
</evidence>
<organism evidence="4">
    <name type="scientific">Xenopus laevis</name>
    <name type="common">African clawed frog</name>
    <dbReference type="NCBI Taxonomy" id="8355"/>
    <lineage>
        <taxon>Eukaryota</taxon>
        <taxon>Metazoa</taxon>
        <taxon>Chordata</taxon>
        <taxon>Craniata</taxon>
        <taxon>Vertebrata</taxon>
        <taxon>Euteleostomi</taxon>
        <taxon>Amphibia</taxon>
        <taxon>Batrachia</taxon>
        <taxon>Anura</taxon>
        <taxon>Pipoidea</taxon>
        <taxon>Pipidae</taxon>
        <taxon>Xenopodinae</taxon>
        <taxon>Xenopus</taxon>
        <taxon>Xenopus</taxon>
    </lineage>
</organism>
<keyword id="KW-0158">Chromosome</keyword>
<keyword id="KW-0507">mRNA processing</keyword>
<keyword id="KW-0508">mRNA splicing</keyword>
<keyword id="KW-0539">Nucleus</keyword>
<keyword id="KW-1185">Reference proteome</keyword>
<keyword id="KW-0694">RNA-binding</keyword>
<name>ARGL1_XENLA</name>
<accession>Q4KLS8</accession>
<gene>
    <name type="primary">arglu1</name>
</gene>
<proteinExistence type="evidence at transcript level"/>
<feature type="chain" id="PRO_0000288444" description="Arginine and glutamate-rich protein 1">
    <location>
        <begin position="1"/>
        <end position="265"/>
    </location>
</feature>
<feature type="region of interest" description="Disordered" evidence="2">
    <location>
        <begin position="1"/>
        <end position="105"/>
    </location>
</feature>
<feature type="region of interest" description="Necessary and sufficient for RNA binding" evidence="1">
    <location>
        <begin position="1"/>
        <end position="66"/>
    </location>
</feature>
<feature type="region of interest" description="Necessary and sufficient for transcriptional regulation" evidence="1">
    <location>
        <begin position="67"/>
        <end position="265"/>
    </location>
</feature>
<feature type="region of interest" description="Disordered" evidence="2">
    <location>
        <begin position="172"/>
        <end position="192"/>
    </location>
</feature>
<feature type="region of interest" description="Disordered" evidence="2">
    <location>
        <begin position="229"/>
        <end position="265"/>
    </location>
</feature>
<feature type="short sequence motif" description="LXXLL motif 1; degenerate" evidence="1">
    <location>
        <begin position="164"/>
        <end position="168"/>
    </location>
</feature>
<feature type="short sequence motif" description="LXXLL motif 2; degenerate" evidence="1">
    <location>
        <begin position="193"/>
        <end position="197"/>
    </location>
</feature>
<feature type="compositionally biased region" description="Basic residues" evidence="2">
    <location>
        <begin position="1"/>
        <end position="54"/>
    </location>
</feature>
<feature type="compositionally biased region" description="Basic and acidic residues" evidence="2">
    <location>
        <begin position="60"/>
        <end position="76"/>
    </location>
</feature>
<feature type="compositionally biased region" description="Basic and acidic residues" evidence="2">
    <location>
        <begin position="85"/>
        <end position="105"/>
    </location>
</feature>
<feature type="compositionally biased region" description="Basic and acidic residues" evidence="2">
    <location>
        <begin position="180"/>
        <end position="192"/>
    </location>
</feature>
<feature type="compositionally biased region" description="Basic and acidic residues" evidence="2">
    <location>
        <begin position="229"/>
        <end position="245"/>
    </location>
</feature>
<reference key="1">
    <citation type="submission" date="2005-07" db="EMBL/GenBank/DDBJ databases">
        <authorList>
            <consortium name="NIH - Xenopus Gene Collection (XGC) project"/>
        </authorList>
    </citation>
    <scope>NUCLEOTIDE SEQUENCE [LARGE SCALE MRNA]</scope>
    <source>
        <tissue>Egg</tissue>
    </source>
</reference>
<protein>
    <recommendedName>
        <fullName>Arginine and glutamate-rich protein 1</fullName>
    </recommendedName>
</protein>
<dbReference type="EMBL" id="BC099017">
    <property type="protein sequence ID" value="AAH99017.1"/>
    <property type="molecule type" value="mRNA"/>
</dbReference>
<dbReference type="RefSeq" id="NP_001090066.1">
    <property type="nucleotide sequence ID" value="NM_001096597.1"/>
</dbReference>
<dbReference type="SMR" id="Q4KLS8"/>
<dbReference type="DNASU" id="735140"/>
<dbReference type="GeneID" id="735140"/>
<dbReference type="KEGG" id="xla:735140"/>
<dbReference type="AGR" id="Xenbase:XB-GENE-5858199"/>
<dbReference type="CTD" id="735140"/>
<dbReference type="Xenbase" id="XB-GENE-5858199">
    <property type="gene designation" value="arglu1.S"/>
</dbReference>
<dbReference type="OMA" id="RMEVERY"/>
<dbReference type="OrthoDB" id="5862042at2759"/>
<dbReference type="Proteomes" id="UP000186698">
    <property type="component" value="Chromosome 2S"/>
</dbReference>
<dbReference type="Bgee" id="735140">
    <property type="expression patterns" value="Expressed in spleen and 19 other cell types or tissues"/>
</dbReference>
<dbReference type="GO" id="GO:0005694">
    <property type="term" value="C:chromosome"/>
    <property type="evidence" value="ECO:0007669"/>
    <property type="project" value="UniProtKB-SubCell"/>
</dbReference>
<dbReference type="GO" id="GO:0005739">
    <property type="term" value="C:mitochondrion"/>
    <property type="evidence" value="ECO:0000318"/>
    <property type="project" value="GO_Central"/>
</dbReference>
<dbReference type="GO" id="GO:0016607">
    <property type="term" value="C:nuclear speck"/>
    <property type="evidence" value="ECO:0000250"/>
    <property type="project" value="UniProtKB"/>
</dbReference>
<dbReference type="GO" id="GO:0005654">
    <property type="term" value="C:nucleoplasm"/>
    <property type="evidence" value="ECO:0000318"/>
    <property type="project" value="GO_Central"/>
</dbReference>
<dbReference type="GO" id="GO:0045296">
    <property type="term" value="F:cadherin binding"/>
    <property type="evidence" value="ECO:0007669"/>
    <property type="project" value="TreeGrafter"/>
</dbReference>
<dbReference type="GO" id="GO:0036002">
    <property type="term" value="F:pre-mRNA binding"/>
    <property type="evidence" value="ECO:0000250"/>
    <property type="project" value="UniProtKB"/>
</dbReference>
<dbReference type="GO" id="GO:0003713">
    <property type="term" value="F:transcription coactivator activity"/>
    <property type="evidence" value="ECO:0000250"/>
    <property type="project" value="UniProtKB"/>
</dbReference>
<dbReference type="GO" id="GO:0006397">
    <property type="term" value="P:mRNA processing"/>
    <property type="evidence" value="ECO:0007669"/>
    <property type="project" value="UniProtKB-KW"/>
</dbReference>
<dbReference type="GO" id="GO:0000381">
    <property type="term" value="P:regulation of alternative mRNA splicing, via spliceosome"/>
    <property type="evidence" value="ECO:0000250"/>
    <property type="project" value="UniProtKB"/>
</dbReference>
<dbReference type="GO" id="GO:0008380">
    <property type="term" value="P:RNA splicing"/>
    <property type="evidence" value="ECO:0007669"/>
    <property type="project" value="UniProtKB-KW"/>
</dbReference>
<dbReference type="InterPro" id="IPR033371">
    <property type="entry name" value="ARGLU1"/>
</dbReference>
<dbReference type="PANTHER" id="PTHR31711">
    <property type="entry name" value="ARGININE AND GLUTAMATE-RICH PROTEIN 1"/>
    <property type="match status" value="1"/>
</dbReference>
<dbReference type="PANTHER" id="PTHR31711:SF1">
    <property type="entry name" value="ARGININE AND GLUTAMATE-RICH PROTEIN 1"/>
    <property type="match status" value="1"/>
</dbReference>
<dbReference type="Pfam" id="PF15346">
    <property type="entry name" value="ARGLU"/>
    <property type="match status" value="1"/>
</dbReference>